<dbReference type="EC" id="6.3.5.5" evidence="1"/>
<dbReference type="EMBL" id="CP000031">
    <property type="protein sequence ID" value="AAV94665.1"/>
    <property type="molecule type" value="Genomic_DNA"/>
</dbReference>
<dbReference type="RefSeq" id="WP_011047115.1">
    <property type="nucleotide sequence ID" value="NC_003911.12"/>
</dbReference>
<dbReference type="SMR" id="Q5LTN6"/>
<dbReference type="STRING" id="246200.SPO1377"/>
<dbReference type="PaxDb" id="246200-SPO1377"/>
<dbReference type="KEGG" id="sil:SPO1377"/>
<dbReference type="eggNOG" id="COG0505">
    <property type="taxonomic scope" value="Bacteria"/>
</dbReference>
<dbReference type="HOGENOM" id="CLU_035901_2_2_5"/>
<dbReference type="OrthoDB" id="9804328at2"/>
<dbReference type="UniPathway" id="UPA00068">
    <property type="reaction ID" value="UER00171"/>
</dbReference>
<dbReference type="UniPathway" id="UPA00070">
    <property type="reaction ID" value="UER00115"/>
</dbReference>
<dbReference type="Proteomes" id="UP000001023">
    <property type="component" value="Chromosome"/>
</dbReference>
<dbReference type="GO" id="GO:0005524">
    <property type="term" value="F:ATP binding"/>
    <property type="evidence" value="ECO:0007669"/>
    <property type="project" value="UniProtKB-UniRule"/>
</dbReference>
<dbReference type="GO" id="GO:0004088">
    <property type="term" value="F:carbamoyl-phosphate synthase (glutamine-hydrolyzing) activity"/>
    <property type="evidence" value="ECO:0007669"/>
    <property type="project" value="UniProtKB-UniRule"/>
</dbReference>
<dbReference type="GO" id="GO:0004359">
    <property type="term" value="F:glutaminase activity"/>
    <property type="evidence" value="ECO:0007669"/>
    <property type="project" value="RHEA"/>
</dbReference>
<dbReference type="GO" id="GO:0006207">
    <property type="term" value="P:'de novo' pyrimidine nucleobase biosynthetic process"/>
    <property type="evidence" value="ECO:0007669"/>
    <property type="project" value="InterPro"/>
</dbReference>
<dbReference type="GO" id="GO:0044205">
    <property type="term" value="P:'de novo' UMP biosynthetic process"/>
    <property type="evidence" value="ECO:0007669"/>
    <property type="project" value="UniProtKB-UniRule"/>
</dbReference>
<dbReference type="GO" id="GO:0006541">
    <property type="term" value="P:glutamine metabolic process"/>
    <property type="evidence" value="ECO:0007669"/>
    <property type="project" value="InterPro"/>
</dbReference>
<dbReference type="GO" id="GO:0006526">
    <property type="term" value="P:L-arginine biosynthetic process"/>
    <property type="evidence" value="ECO:0007669"/>
    <property type="project" value="UniProtKB-UniRule"/>
</dbReference>
<dbReference type="CDD" id="cd01744">
    <property type="entry name" value="GATase1_CPSase"/>
    <property type="match status" value="1"/>
</dbReference>
<dbReference type="FunFam" id="3.50.30.20:FF:000001">
    <property type="entry name" value="Carbamoyl-phosphate synthase small chain"/>
    <property type="match status" value="1"/>
</dbReference>
<dbReference type="Gene3D" id="3.40.50.880">
    <property type="match status" value="1"/>
</dbReference>
<dbReference type="Gene3D" id="3.50.30.20">
    <property type="entry name" value="Carbamoyl-phosphate synthase small subunit, N-terminal domain"/>
    <property type="match status" value="1"/>
</dbReference>
<dbReference type="HAMAP" id="MF_01209">
    <property type="entry name" value="CPSase_S_chain"/>
    <property type="match status" value="1"/>
</dbReference>
<dbReference type="InterPro" id="IPR050472">
    <property type="entry name" value="Anth_synth/Amidotransfase"/>
</dbReference>
<dbReference type="InterPro" id="IPR006274">
    <property type="entry name" value="CarbamoylP_synth_ssu"/>
</dbReference>
<dbReference type="InterPro" id="IPR002474">
    <property type="entry name" value="CarbamoylP_synth_ssu_N"/>
</dbReference>
<dbReference type="InterPro" id="IPR036480">
    <property type="entry name" value="CarbP_synth_ssu_N_sf"/>
</dbReference>
<dbReference type="InterPro" id="IPR029062">
    <property type="entry name" value="Class_I_gatase-like"/>
</dbReference>
<dbReference type="InterPro" id="IPR035686">
    <property type="entry name" value="CPSase_GATase1"/>
</dbReference>
<dbReference type="InterPro" id="IPR017926">
    <property type="entry name" value="GATASE"/>
</dbReference>
<dbReference type="NCBIfam" id="TIGR01368">
    <property type="entry name" value="CPSaseIIsmall"/>
    <property type="match status" value="1"/>
</dbReference>
<dbReference type="NCBIfam" id="NF009475">
    <property type="entry name" value="PRK12838.1"/>
    <property type="match status" value="1"/>
</dbReference>
<dbReference type="PANTHER" id="PTHR43418:SF7">
    <property type="entry name" value="CARBAMOYL-PHOSPHATE SYNTHASE SMALL CHAIN"/>
    <property type="match status" value="1"/>
</dbReference>
<dbReference type="PANTHER" id="PTHR43418">
    <property type="entry name" value="MULTIFUNCTIONAL TRYPTOPHAN BIOSYNTHESIS PROTEIN-RELATED"/>
    <property type="match status" value="1"/>
</dbReference>
<dbReference type="Pfam" id="PF00988">
    <property type="entry name" value="CPSase_sm_chain"/>
    <property type="match status" value="1"/>
</dbReference>
<dbReference type="Pfam" id="PF00117">
    <property type="entry name" value="GATase"/>
    <property type="match status" value="1"/>
</dbReference>
<dbReference type="PRINTS" id="PR00097">
    <property type="entry name" value="ANTSNTHASEII"/>
</dbReference>
<dbReference type="PRINTS" id="PR00099">
    <property type="entry name" value="CPSGATASE"/>
</dbReference>
<dbReference type="PRINTS" id="PR00096">
    <property type="entry name" value="GATASE"/>
</dbReference>
<dbReference type="SMART" id="SM01097">
    <property type="entry name" value="CPSase_sm_chain"/>
    <property type="match status" value="1"/>
</dbReference>
<dbReference type="SUPFAM" id="SSF52021">
    <property type="entry name" value="Carbamoyl phosphate synthetase, small subunit N-terminal domain"/>
    <property type="match status" value="1"/>
</dbReference>
<dbReference type="SUPFAM" id="SSF52317">
    <property type="entry name" value="Class I glutamine amidotransferase-like"/>
    <property type="match status" value="1"/>
</dbReference>
<dbReference type="PROSITE" id="PS51273">
    <property type="entry name" value="GATASE_TYPE_1"/>
    <property type="match status" value="1"/>
</dbReference>
<gene>
    <name evidence="1" type="primary">carA</name>
    <name type="ordered locus">SPO1377</name>
</gene>
<sequence length="388" mass="41538">MAQNPLSKPTACLVLADGTVFYGTGFGATGQTVAELCFNTAMTGYQEIMTDPSYAGQIVTFTFPHIGNVGVTPEDDETTDPVAAGMVVKWDPTAASNWRAAEELKGWLARRGRIAIGGVDTRRLTRAIRQQGAPHVALAHDPEGKFDLAALIAAARGFAGLEGMDLAKDVTCAQSYRWDEMRWAWPEGYARQEAPKHKVVAIDYGAKRNILRCLASSGCDVTVLPATATAAEVLAHAPDGVFLSNGPGDPAATGEYAVPMIREILDTTSLPVFGICLGHQMLALALGGRTVKMNHGHHGANHPVKDLETGKVEITSMNHGFAVDAQSLPEGVVETHRSLFDGSNCGIRMSERPVFSVQYHPEASPGPQDSFYLFERFAAAMDAQKAEV</sequence>
<proteinExistence type="inferred from homology"/>
<name>CARA_RUEPO</name>
<accession>Q5LTN6</accession>
<comment type="function">
    <text evidence="1">Small subunit of the glutamine-dependent carbamoyl phosphate synthetase (CPSase). CPSase catalyzes the formation of carbamoyl phosphate from the ammonia moiety of glutamine, carbonate, and phosphate donated by ATP, constituting the first step of 2 biosynthetic pathways, one leading to arginine and/or urea and the other to pyrimidine nucleotides. The small subunit (glutamine amidotransferase) binds and cleaves glutamine to supply the large subunit with the substrate ammonia.</text>
</comment>
<comment type="catalytic activity">
    <reaction evidence="1">
        <text>hydrogencarbonate + L-glutamine + 2 ATP + H2O = carbamoyl phosphate + L-glutamate + 2 ADP + phosphate + 2 H(+)</text>
        <dbReference type="Rhea" id="RHEA:18633"/>
        <dbReference type="ChEBI" id="CHEBI:15377"/>
        <dbReference type="ChEBI" id="CHEBI:15378"/>
        <dbReference type="ChEBI" id="CHEBI:17544"/>
        <dbReference type="ChEBI" id="CHEBI:29985"/>
        <dbReference type="ChEBI" id="CHEBI:30616"/>
        <dbReference type="ChEBI" id="CHEBI:43474"/>
        <dbReference type="ChEBI" id="CHEBI:58228"/>
        <dbReference type="ChEBI" id="CHEBI:58359"/>
        <dbReference type="ChEBI" id="CHEBI:456216"/>
        <dbReference type="EC" id="6.3.5.5"/>
    </reaction>
</comment>
<comment type="catalytic activity">
    <molecule>Carbamoyl phosphate synthase small chain</molecule>
    <reaction evidence="1">
        <text>L-glutamine + H2O = L-glutamate + NH4(+)</text>
        <dbReference type="Rhea" id="RHEA:15889"/>
        <dbReference type="ChEBI" id="CHEBI:15377"/>
        <dbReference type="ChEBI" id="CHEBI:28938"/>
        <dbReference type="ChEBI" id="CHEBI:29985"/>
        <dbReference type="ChEBI" id="CHEBI:58359"/>
    </reaction>
</comment>
<comment type="pathway">
    <text evidence="1">Amino-acid biosynthesis; L-arginine biosynthesis; carbamoyl phosphate from bicarbonate: step 1/1.</text>
</comment>
<comment type="pathway">
    <text evidence="1">Pyrimidine metabolism; UMP biosynthesis via de novo pathway; (S)-dihydroorotate from bicarbonate: step 1/3.</text>
</comment>
<comment type="subunit">
    <text evidence="1">Composed of two chains; the small (or glutamine) chain promotes the hydrolysis of glutamine to ammonia, which is used by the large (or ammonia) chain to synthesize carbamoyl phosphate. Tetramer of heterodimers (alpha,beta)4.</text>
</comment>
<comment type="similarity">
    <text evidence="1">Belongs to the CarA family.</text>
</comment>
<protein>
    <recommendedName>
        <fullName evidence="1">Carbamoyl phosphate synthase small chain</fullName>
        <ecNumber evidence="1">6.3.5.5</ecNumber>
    </recommendedName>
    <alternativeName>
        <fullName evidence="1">Carbamoyl phosphate synthetase glutamine chain</fullName>
    </alternativeName>
</protein>
<keyword id="KW-0028">Amino-acid biosynthesis</keyword>
<keyword id="KW-0055">Arginine biosynthesis</keyword>
<keyword id="KW-0067">ATP-binding</keyword>
<keyword id="KW-0315">Glutamine amidotransferase</keyword>
<keyword id="KW-0436">Ligase</keyword>
<keyword id="KW-0547">Nucleotide-binding</keyword>
<keyword id="KW-0665">Pyrimidine biosynthesis</keyword>
<keyword id="KW-1185">Reference proteome</keyword>
<organism>
    <name type="scientific">Ruegeria pomeroyi (strain ATCC 700808 / DSM 15171 / DSS-3)</name>
    <name type="common">Silicibacter pomeroyi</name>
    <dbReference type="NCBI Taxonomy" id="246200"/>
    <lineage>
        <taxon>Bacteria</taxon>
        <taxon>Pseudomonadati</taxon>
        <taxon>Pseudomonadota</taxon>
        <taxon>Alphaproteobacteria</taxon>
        <taxon>Rhodobacterales</taxon>
        <taxon>Roseobacteraceae</taxon>
        <taxon>Ruegeria</taxon>
    </lineage>
</organism>
<feature type="chain" id="PRO_1000138878" description="Carbamoyl phosphate synthase small chain">
    <location>
        <begin position="1"/>
        <end position="388"/>
    </location>
</feature>
<feature type="domain" description="Glutamine amidotransferase type-1" evidence="1">
    <location>
        <begin position="198"/>
        <end position="387"/>
    </location>
</feature>
<feature type="region of interest" description="CPSase" evidence="1">
    <location>
        <begin position="1"/>
        <end position="194"/>
    </location>
</feature>
<feature type="active site" description="Nucleophile" evidence="1">
    <location>
        <position position="276"/>
    </location>
</feature>
<feature type="active site" evidence="1">
    <location>
        <position position="360"/>
    </location>
</feature>
<feature type="active site" evidence="1">
    <location>
        <position position="362"/>
    </location>
</feature>
<feature type="binding site" evidence="1">
    <location>
        <position position="53"/>
    </location>
    <ligand>
        <name>L-glutamine</name>
        <dbReference type="ChEBI" id="CHEBI:58359"/>
    </ligand>
</feature>
<feature type="binding site" evidence="1">
    <location>
        <position position="246"/>
    </location>
    <ligand>
        <name>L-glutamine</name>
        <dbReference type="ChEBI" id="CHEBI:58359"/>
    </ligand>
</feature>
<feature type="binding site" evidence="1">
    <location>
        <position position="248"/>
    </location>
    <ligand>
        <name>L-glutamine</name>
        <dbReference type="ChEBI" id="CHEBI:58359"/>
    </ligand>
</feature>
<feature type="binding site" evidence="1">
    <location>
        <position position="277"/>
    </location>
    <ligand>
        <name>L-glutamine</name>
        <dbReference type="ChEBI" id="CHEBI:58359"/>
    </ligand>
</feature>
<feature type="binding site" evidence="1">
    <location>
        <position position="280"/>
    </location>
    <ligand>
        <name>L-glutamine</name>
        <dbReference type="ChEBI" id="CHEBI:58359"/>
    </ligand>
</feature>
<feature type="binding site" evidence="1">
    <location>
        <position position="318"/>
    </location>
    <ligand>
        <name>L-glutamine</name>
        <dbReference type="ChEBI" id="CHEBI:58359"/>
    </ligand>
</feature>
<feature type="binding site" evidence="1">
    <location>
        <position position="320"/>
    </location>
    <ligand>
        <name>L-glutamine</name>
        <dbReference type="ChEBI" id="CHEBI:58359"/>
    </ligand>
</feature>
<feature type="binding site" evidence="1">
    <location>
        <position position="321"/>
    </location>
    <ligand>
        <name>L-glutamine</name>
        <dbReference type="ChEBI" id="CHEBI:58359"/>
    </ligand>
</feature>
<reference key="1">
    <citation type="journal article" date="2004" name="Nature">
        <title>Genome sequence of Silicibacter pomeroyi reveals adaptations to the marine environment.</title>
        <authorList>
            <person name="Moran M.A."/>
            <person name="Buchan A."/>
            <person name="Gonzalez J.M."/>
            <person name="Heidelberg J.F."/>
            <person name="Whitman W.B."/>
            <person name="Kiene R.P."/>
            <person name="Henriksen J.R."/>
            <person name="King G.M."/>
            <person name="Belas R."/>
            <person name="Fuqua C."/>
            <person name="Brinkac L.M."/>
            <person name="Lewis M."/>
            <person name="Johri S."/>
            <person name="Weaver B."/>
            <person name="Pai G."/>
            <person name="Eisen J.A."/>
            <person name="Rahe E."/>
            <person name="Sheldon W.M."/>
            <person name="Ye W."/>
            <person name="Miller T.R."/>
            <person name="Carlton J."/>
            <person name="Rasko D.A."/>
            <person name="Paulsen I.T."/>
            <person name="Ren Q."/>
            <person name="Daugherty S.C."/>
            <person name="DeBoy R.T."/>
            <person name="Dodson R.J."/>
            <person name="Durkin A.S."/>
            <person name="Madupu R."/>
            <person name="Nelson W.C."/>
            <person name="Sullivan S.A."/>
            <person name="Rosovitz M.J."/>
            <person name="Haft D.H."/>
            <person name="Selengut J."/>
            <person name="Ward N."/>
        </authorList>
    </citation>
    <scope>NUCLEOTIDE SEQUENCE [LARGE SCALE GENOMIC DNA]</scope>
    <source>
        <strain>ATCC 700808 / DSM 15171 / DSS-3</strain>
    </source>
</reference>
<reference key="2">
    <citation type="journal article" date="2014" name="Stand. Genomic Sci.">
        <title>An updated genome annotation for the model marine bacterium Ruegeria pomeroyi DSS-3.</title>
        <authorList>
            <person name="Rivers A.R."/>
            <person name="Smith C.B."/>
            <person name="Moran M.A."/>
        </authorList>
    </citation>
    <scope>GENOME REANNOTATION</scope>
    <source>
        <strain>ATCC 700808 / DSM 15171 / DSS-3</strain>
    </source>
</reference>
<evidence type="ECO:0000255" key="1">
    <source>
        <dbReference type="HAMAP-Rule" id="MF_01209"/>
    </source>
</evidence>